<sequence length="176" mass="19027">MSKVRKNEEALSEVLVDVNRVTKVVKGGRRFAFSAYVVVGDKAGRVGAGHGKAKEVNEAREKAKQAAKKKMMKVSLYQNRTIHHDVIGRSGAAKVVLRRAKAGTGVIAGGSMRAIFDSLGVHDIVAKSIGSTNVYTMIAATFDALKKLSSPKSIAARRDKKMNEIFIKSSDIQVNE</sequence>
<organism>
    <name type="scientific">Rickettsia bellii (strain RML369-C)</name>
    <dbReference type="NCBI Taxonomy" id="336407"/>
    <lineage>
        <taxon>Bacteria</taxon>
        <taxon>Pseudomonadati</taxon>
        <taxon>Pseudomonadota</taxon>
        <taxon>Alphaproteobacteria</taxon>
        <taxon>Rickettsiales</taxon>
        <taxon>Rickettsiaceae</taxon>
        <taxon>Rickettsieae</taxon>
        <taxon>Rickettsia</taxon>
        <taxon>belli group</taxon>
    </lineage>
</organism>
<proteinExistence type="inferred from homology"/>
<gene>
    <name evidence="1" type="primary">rpsE</name>
    <name type="ordered locus">RBE_1045</name>
</gene>
<evidence type="ECO:0000255" key="1">
    <source>
        <dbReference type="HAMAP-Rule" id="MF_01307"/>
    </source>
</evidence>
<evidence type="ECO:0000305" key="2"/>
<comment type="function">
    <text evidence="1">With S4 and S12 plays an important role in translational accuracy.</text>
</comment>
<comment type="function">
    <text evidence="1">Located at the back of the 30S subunit body where it stabilizes the conformation of the head with respect to the body.</text>
</comment>
<comment type="subunit">
    <text evidence="1">Part of the 30S ribosomal subunit. Contacts proteins S4 and S8.</text>
</comment>
<comment type="domain">
    <text>The N-terminal domain interacts with the head of the 30S subunit; the C-terminal domain interacts with the body and contacts protein S4. The interaction surface between S4 and S5 is involved in control of translational fidelity.</text>
</comment>
<comment type="similarity">
    <text evidence="1">Belongs to the universal ribosomal protein uS5 family.</text>
</comment>
<protein>
    <recommendedName>
        <fullName evidence="1">Small ribosomal subunit protein uS5</fullName>
    </recommendedName>
    <alternativeName>
        <fullName evidence="2">30S ribosomal protein S5</fullName>
    </alternativeName>
</protein>
<name>RS5_RICBR</name>
<feature type="chain" id="PRO_0000272397" description="Small ribosomal subunit protein uS5">
    <location>
        <begin position="1"/>
        <end position="176"/>
    </location>
</feature>
<feature type="domain" description="S5 DRBM" evidence="1">
    <location>
        <begin position="11"/>
        <end position="74"/>
    </location>
</feature>
<accession>Q1RHN8</accession>
<reference key="1">
    <citation type="journal article" date="2006" name="PLoS Genet.">
        <title>Genome sequence of Rickettsia bellii illuminates the role of amoebae in gene exchanges between intracellular pathogens.</title>
        <authorList>
            <person name="Ogata H."/>
            <person name="La Scola B."/>
            <person name="Audic S."/>
            <person name="Renesto P."/>
            <person name="Blanc G."/>
            <person name="Robert C."/>
            <person name="Fournier P.-E."/>
            <person name="Claverie J.-M."/>
            <person name="Raoult D."/>
        </authorList>
    </citation>
    <scope>NUCLEOTIDE SEQUENCE [LARGE SCALE GENOMIC DNA]</scope>
    <source>
        <strain>RML369-C</strain>
    </source>
</reference>
<dbReference type="EMBL" id="CP000087">
    <property type="protein sequence ID" value="ABE05126.1"/>
    <property type="molecule type" value="Genomic_DNA"/>
</dbReference>
<dbReference type="RefSeq" id="WP_011477704.1">
    <property type="nucleotide sequence ID" value="NC_007940.1"/>
</dbReference>
<dbReference type="SMR" id="Q1RHN8"/>
<dbReference type="KEGG" id="rbe:RBE_1045"/>
<dbReference type="eggNOG" id="COG0098">
    <property type="taxonomic scope" value="Bacteria"/>
</dbReference>
<dbReference type="HOGENOM" id="CLU_065898_2_2_5"/>
<dbReference type="OrthoDB" id="9809045at2"/>
<dbReference type="Proteomes" id="UP000001951">
    <property type="component" value="Chromosome"/>
</dbReference>
<dbReference type="GO" id="GO:0015935">
    <property type="term" value="C:small ribosomal subunit"/>
    <property type="evidence" value="ECO:0007669"/>
    <property type="project" value="InterPro"/>
</dbReference>
<dbReference type="GO" id="GO:0019843">
    <property type="term" value="F:rRNA binding"/>
    <property type="evidence" value="ECO:0007669"/>
    <property type="project" value="UniProtKB-UniRule"/>
</dbReference>
<dbReference type="GO" id="GO:0003735">
    <property type="term" value="F:structural constituent of ribosome"/>
    <property type="evidence" value="ECO:0007669"/>
    <property type="project" value="InterPro"/>
</dbReference>
<dbReference type="GO" id="GO:0006412">
    <property type="term" value="P:translation"/>
    <property type="evidence" value="ECO:0007669"/>
    <property type="project" value="UniProtKB-UniRule"/>
</dbReference>
<dbReference type="FunFam" id="3.30.230.10:FF:000002">
    <property type="entry name" value="30S ribosomal protein S5"/>
    <property type="match status" value="1"/>
</dbReference>
<dbReference type="Gene3D" id="3.30.160.20">
    <property type="match status" value="1"/>
</dbReference>
<dbReference type="Gene3D" id="3.30.230.10">
    <property type="match status" value="1"/>
</dbReference>
<dbReference type="HAMAP" id="MF_01307_B">
    <property type="entry name" value="Ribosomal_uS5_B"/>
    <property type="match status" value="1"/>
</dbReference>
<dbReference type="InterPro" id="IPR020568">
    <property type="entry name" value="Ribosomal_Su5_D2-typ_SF"/>
</dbReference>
<dbReference type="InterPro" id="IPR000851">
    <property type="entry name" value="Ribosomal_uS5"/>
</dbReference>
<dbReference type="InterPro" id="IPR005712">
    <property type="entry name" value="Ribosomal_uS5_bac-type"/>
</dbReference>
<dbReference type="InterPro" id="IPR005324">
    <property type="entry name" value="Ribosomal_uS5_C"/>
</dbReference>
<dbReference type="InterPro" id="IPR013810">
    <property type="entry name" value="Ribosomal_uS5_N"/>
</dbReference>
<dbReference type="InterPro" id="IPR018192">
    <property type="entry name" value="Ribosomal_uS5_N_CS"/>
</dbReference>
<dbReference type="InterPro" id="IPR014721">
    <property type="entry name" value="Ribsml_uS5_D2-typ_fold_subgr"/>
</dbReference>
<dbReference type="NCBIfam" id="TIGR01021">
    <property type="entry name" value="rpsE_bact"/>
    <property type="match status" value="1"/>
</dbReference>
<dbReference type="PANTHER" id="PTHR48277">
    <property type="entry name" value="MITOCHONDRIAL RIBOSOMAL PROTEIN S5"/>
    <property type="match status" value="1"/>
</dbReference>
<dbReference type="PANTHER" id="PTHR48277:SF1">
    <property type="entry name" value="MITOCHONDRIAL RIBOSOMAL PROTEIN S5"/>
    <property type="match status" value="1"/>
</dbReference>
<dbReference type="Pfam" id="PF00333">
    <property type="entry name" value="Ribosomal_S5"/>
    <property type="match status" value="1"/>
</dbReference>
<dbReference type="Pfam" id="PF03719">
    <property type="entry name" value="Ribosomal_S5_C"/>
    <property type="match status" value="1"/>
</dbReference>
<dbReference type="SUPFAM" id="SSF54768">
    <property type="entry name" value="dsRNA-binding domain-like"/>
    <property type="match status" value="1"/>
</dbReference>
<dbReference type="SUPFAM" id="SSF54211">
    <property type="entry name" value="Ribosomal protein S5 domain 2-like"/>
    <property type="match status" value="1"/>
</dbReference>
<dbReference type="PROSITE" id="PS00585">
    <property type="entry name" value="RIBOSOMAL_S5"/>
    <property type="match status" value="1"/>
</dbReference>
<dbReference type="PROSITE" id="PS50881">
    <property type="entry name" value="S5_DSRBD"/>
    <property type="match status" value="1"/>
</dbReference>
<keyword id="KW-0687">Ribonucleoprotein</keyword>
<keyword id="KW-0689">Ribosomal protein</keyword>
<keyword id="KW-0694">RNA-binding</keyword>
<keyword id="KW-0699">rRNA-binding</keyword>